<comment type="function">
    <text evidence="1">Receptor tyrosine kinase that transduces signals from the extracellular matrix into the cytoplasm by binding to hepatocyte growth factor/HGF ligand. Regulates many physiological processes including proliferation, scattering, morphogenesis and survival. Ligand binding at the cell surface induces autophosphorylation of MET on its intracellular domain that provides docking sites for downstream signaling molecules. Following activation by ligand, interacts with the PI3-kinase subunit PIK3R1, PLCG1, SRC, GRB2, STAT3 or the adapter GAB1. Recruitment of these downstream effectors by MET leads to the activation of several signaling cascades including the RAS-ERK, PI3 kinase-AKT, or PLCgamma-PKC. The RAS-ERK activation is associated with the morphogenetic effects while PI3K/AKT coordinates prosurvival effects. During embryonic development, MET signaling plays a role in gastrulation, development and migration of muscles and neuronal precursors, angiogenesis and kidney formation. In adults, participates in wound healing as well as organ regeneration and tissue remodeling. Also promotes differentiation and proliferation of hematopoietic cells (By similarity).</text>
</comment>
<comment type="catalytic activity">
    <reaction evidence="7">
        <text>L-tyrosyl-[protein] + ATP = O-phospho-L-tyrosyl-[protein] + ADP + H(+)</text>
        <dbReference type="Rhea" id="RHEA:10596"/>
        <dbReference type="Rhea" id="RHEA-COMP:10136"/>
        <dbReference type="Rhea" id="RHEA-COMP:20101"/>
        <dbReference type="ChEBI" id="CHEBI:15378"/>
        <dbReference type="ChEBI" id="CHEBI:30616"/>
        <dbReference type="ChEBI" id="CHEBI:46858"/>
        <dbReference type="ChEBI" id="CHEBI:61978"/>
        <dbReference type="ChEBI" id="CHEBI:456216"/>
        <dbReference type="EC" id="2.7.10.1"/>
    </reaction>
</comment>
<comment type="activity regulation">
    <text evidence="1">In its inactive state, the C-terminal tail interacts with the catalytic domain and inhibits the kinase activity. Upon ligand binding, the C-terminal tail is displaced and becomes phosphorylated, thus increasing the kinase activity (By similarity).</text>
</comment>
<comment type="subunit">
    <text evidence="2 3">Heterodimer made of an alpha chain (50 kDa) and a beta chain (145 kDa) which are disulfide linked. Binds PLXNB1. Interacts when phosphorylated with downstream effectors including STAT3, PIK3R1, SRC, PCLG1, GRB2 and GAB1. Interacts with SPSB1, SPSB2 and SPSB4. Interacts with INPP5D/SHIP1. When phosphorylated at Tyr-1357, interacts with INPPL1/SHIP2. Interacts with RANBP9 and RANBP10, as well as SPSB1, SPSB2, SPSB3 and SPSB4. SPSB1 binding occurs in the presence and in the absence of HGF, however HGF treatment has a positive effect on this interaction. Interacts with MUC20; prevents interaction with GRB2 and suppresses hepatocyte growth factor-induced cell proliferation. Interacts with GRB10. Interacts with PTPN1 and PTPN2. Interacts with HSP90AA1 and HSP90AB1; the interaction suppresses MET kinase activity. Interacts with tensin TNS3 (By similarity). Interacts (when phosphorylated) with tensin TNS4 (via SH2 domain); the interaction increases MET protein stability by inhibiting MET endocytosis and subsequent lysosomal degradation (By similarity).</text>
</comment>
<comment type="subcellular location">
    <subcellularLocation>
        <location evidence="1">Membrane</location>
        <topology evidence="1">Single-pass type I membrane protein</topology>
    </subcellularLocation>
</comment>
<comment type="domain">
    <text evidence="1">The kinase domain is involved in SPSB1 binding.</text>
</comment>
<comment type="domain">
    <text evidence="1">The beta-propeller Sema domain mediates binding to HGF.</text>
</comment>
<comment type="PTM">
    <text evidence="2">Autophosphorylated in response to ligand binding on Tyr-1235 and Tyr-1236 in the kinase domain leading to further phosphorylation of Tyr-1350 and Tyr-1357 in the C-terminal multifunctional docking site. Dephosphorylated by PTPRJ at Tyr-1350 and Tyr-1366. Dephosphorylated by PTPN1 and PTPN2 (By similarity).</text>
</comment>
<comment type="PTM">
    <text evidence="2">Ubiquitinated. Ubiquitination by CBL regulates the receptor stability and activity through proteasomal degradation (By similarity).</text>
</comment>
<comment type="PTM">
    <text evidence="2">O-mannosylation of IPT/TIG domains by TMEM260 is required for protein maturation. O-mannosylated residues are composed of single mannose glycans that are not elongated or modified.</text>
</comment>
<comment type="similarity">
    <text evidence="5">Belongs to the protein kinase superfamily. Tyr protein kinase family.</text>
</comment>
<name>MET_MICMU</name>
<evidence type="ECO:0000250" key="1"/>
<evidence type="ECO:0000250" key="2">
    <source>
        <dbReference type="UniProtKB" id="P08581"/>
    </source>
</evidence>
<evidence type="ECO:0000250" key="3">
    <source>
        <dbReference type="UniProtKB" id="P16056"/>
    </source>
</evidence>
<evidence type="ECO:0000255" key="4"/>
<evidence type="ECO:0000255" key="5">
    <source>
        <dbReference type="PROSITE-ProRule" id="PRU00159"/>
    </source>
</evidence>
<evidence type="ECO:0000255" key="6">
    <source>
        <dbReference type="PROSITE-ProRule" id="PRU00352"/>
    </source>
</evidence>
<evidence type="ECO:0000255" key="7">
    <source>
        <dbReference type="PROSITE-ProRule" id="PRU10028"/>
    </source>
</evidence>
<sequence>MKASAVLAPGILALLFTLVQGSDGECHEALAKSEMNVNMKYQLPNFTAETPIQNVVLHDHHIYLGATNYIYVLNDRDLQKVAEYKTGPVLEHPDCFPCQNCSDIANFSGGIWKDNINRALLVDTYYDDQLISCGSVNRGACQRHVLPPDNPADIRSEVHCMFSPQADEEPGQCPDCVVSALGAKVLLSVKDRFINFFVGNTLNSSYFPDHPLHSISVRRLKETQDGFKFLTDQSYIDVLPEFRDSYPIKYVHAFESNHFIYFLTVQRETLDAQTFHTRIIRFCSVDSGLHSYMEMPLECILTEKRRKRSTREEVFNILQAAYVSKPGAQLAKQIGASLNDDILFGVFAQSKPDSAEPMNRSAVCAFPIKYVNDFFNKIVNKNNVRCLQHFYGPHHEHCFNRTLLRNSSGCEVRKDEYRTEFTTALQRVDLFMGQFNQVLLTSISTFIKGDLTIANLGTSEGRFMQVVVSRSGSSTPHVNFQLDSHPVSPEVIVEHPLNQNGYTLVVTGKRITKIPLNGLGCGHFQSCSQCLSAPSFVQCGWCHDKCVRSEECPTGTWTQEICLPAIHKVFPTSAPLEGGTMLTICGWDFGFRRNNKFDLKKTKVLLGNESCTLTLSESTTNMLKCTVGPAMSEHFNMSIVISHGRGMTQYSTFSYVDPVITSISPSYGPKAGGTLLTLTGKYLNSGNSRHISIGGKTCTLKSVSNSILECYTPAQIISTEFPVKLKIDLANRETSSFSYQEDPVVYEIHPTKSFVSGGSTITGVGKNLNSVSVPRMVINVQEAGRNFTVACQHRSNSEIICCTTPSLQQLNLQLPLKTKAFFMLDGILSKYFDLIYVHNPVFKPFEKPVMISMGNENVLEIKGNDIDPEAVKGEVLKVGNKSCENIHSHSEAVLCTVPNDLLKLNSELNIEWKQAVSSTVLGKVIVQPDQNFTGLIVGVVSISIILLLLLGLFLWMKKRKQIKDLGSELVRYDARVHTPHLDRLVSARSVSPTTEMVSNESVDYRATFPEDQFPNSSQNGSCRQVQYPLTDLSPILTSGDSDISSPLLQNTVHIDLSALNPELVQAVQHVVIGPSSLIVHFNEVIGRGHFGCVYHGTLLDNDGKKIHCAVKSLNRITDIGEVSQFLTEGIIMKDFSHPNVLSLLGICLRSEGSPLVVLPYMKHGDLRNFIRNETHNPTVKDLIGFGLQVAKGMKYLASKKFVHRDLAARNCMLDEKFTVKVADFGLARDMYDKEYYSVHNKTGAKLPVKWMALESLQTQKFTTKSDVWSFGVLLWELMTRGAPPYPDVNTFDITVYLLQGRRLLQPEYCPDPLYEVMLKCWHPKAEMRPSFSELVSRISAIFSTFIGEHYVHVNATYVNVKCVAPYPSLLSSQDNINGEVDT</sequence>
<dbReference type="EC" id="2.7.10.1"/>
<dbReference type="EMBL" id="DP000022">
    <property type="protein sequence ID" value="ABB89820.1"/>
    <property type="molecule type" value="Genomic_DNA"/>
</dbReference>
<dbReference type="RefSeq" id="XP_012616555.1">
    <property type="nucleotide sequence ID" value="XM_012761101.2"/>
</dbReference>
<dbReference type="SMR" id="Q2QL89"/>
<dbReference type="GlyCosmos" id="Q2QL89">
    <property type="glycosylation" value="12 sites, No reported glycans"/>
</dbReference>
<dbReference type="Ensembl" id="ENSMICT00000062442.1">
    <property type="protein sequence ID" value="ENSMICP00000048273.1"/>
    <property type="gene ID" value="ENSMICG00000000697.3"/>
</dbReference>
<dbReference type="GeneID" id="105869368"/>
<dbReference type="KEGG" id="mmur:105869368"/>
<dbReference type="CTD" id="4233"/>
<dbReference type="GeneTree" id="ENSGT00940000158022"/>
<dbReference type="OrthoDB" id="9985181at2759"/>
<dbReference type="Proteomes" id="UP000694394">
    <property type="component" value="Chromosome 11"/>
</dbReference>
<dbReference type="GO" id="GO:0005886">
    <property type="term" value="C:plasma membrane"/>
    <property type="evidence" value="ECO:0007669"/>
    <property type="project" value="TreeGrafter"/>
</dbReference>
<dbReference type="GO" id="GO:0002116">
    <property type="term" value="C:semaphorin receptor complex"/>
    <property type="evidence" value="ECO:0007669"/>
    <property type="project" value="TreeGrafter"/>
</dbReference>
<dbReference type="GO" id="GO:0005524">
    <property type="term" value="F:ATP binding"/>
    <property type="evidence" value="ECO:0007669"/>
    <property type="project" value="UniProtKB-KW"/>
</dbReference>
<dbReference type="GO" id="GO:0017154">
    <property type="term" value="F:semaphorin receptor activity"/>
    <property type="evidence" value="ECO:0007669"/>
    <property type="project" value="InterPro"/>
</dbReference>
<dbReference type="GO" id="GO:0004714">
    <property type="term" value="F:transmembrane receptor protein tyrosine kinase activity"/>
    <property type="evidence" value="ECO:0007669"/>
    <property type="project" value="UniProtKB-EC"/>
</dbReference>
<dbReference type="GO" id="GO:0007169">
    <property type="term" value="P:cell surface receptor protein tyrosine kinase signaling pathway"/>
    <property type="evidence" value="ECO:0007669"/>
    <property type="project" value="InterPro"/>
</dbReference>
<dbReference type="GO" id="GO:0050918">
    <property type="term" value="P:positive chemotaxis"/>
    <property type="evidence" value="ECO:0000250"/>
    <property type="project" value="UniProtKB"/>
</dbReference>
<dbReference type="GO" id="GO:2001028">
    <property type="term" value="P:positive regulation of endothelial cell chemotaxis"/>
    <property type="evidence" value="ECO:0000250"/>
    <property type="project" value="UniProtKB"/>
</dbReference>
<dbReference type="GO" id="GO:0071526">
    <property type="term" value="P:semaphorin-plexin signaling pathway"/>
    <property type="evidence" value="ECO:0000250"/>
    <property type="project" value="UniProtKB"/>
</dbReference>
<dbReference type="CDD" id="cd00603">
    <property type="entry name" value="IPT_PCSR"/>
    <property type="match status" value="1"/>
</dbReference>
<dbReference type="CDD" id="cd01180">
    <property type="entry name" value="IPT_plexin_repeat1"/>
    <property type="match status" value="1"/>
</dbReference>
<dbReference type="CDD" id="cd01179">
    <property type="entry name" value="IPT_plexin_repeat2"/>
    <property type="match status" value="1"/>
</dbReference>
<dbReference type="CDD" id="cd05058">
    <property type="entry name" value="PTKc_Met_Ron"/>
    <property type="match status" value="1"/>
</dbReference>
<dbReference type="CDD" id="cd11278">
    <property type="entry name" value="Sema_MET"/>
    <property type="match status" value="1"/>
</dbReference>
<dbReference type="FunFam" id="1.10.510.10:FF:000093">
    <property type="entry name" value="Hepatocyte growth factor receptor"/>
    <property type="match status" value="1"/>
</dbReference>
<dbReference type="FunFam" id="2.130.10.10:FF:000088">
    <property type="entry name" value="Hepatocyte growth factor receptor"/>
    <property type="match status" value="1"/>
</dbReference>
<dbReference type="FunFam" id="2.60.40.10:FF:000213">
    <property type="entry name" value="Hepatocyte growth factor receptor"/>
    <property type="match status" value="1"/>
</dbReference>
<dbReference type="FunFam" id="2.60.40.10:FF:000400">
    <property type="entry name" value="Hepatocyte growth factor receptor"/>
    <property type="match status" value="1"/>
</dbReference>
<dbReference type="FunFam" id="2.60.40.10:FF:002708">
    <property type="entry name" value="Hepatocyte growth factor receptor"/>
    <property type="match status" value="1"/>
</dbReference>
<dbReference type="FunFam" id="3.30.200.20:FF:000188">
    <property type="entry name" value="Hepatocyte growth factor receptor"/>
    <property type="match status" value="1"/>
</dbReference>
<dbReference type="Gene3D" id="2.60.40.10">
    <property type="entry name" value="Immunoglobulins"/>
    <property type="match status" value="3"/>
</dbReference>
<dbReference type="Gene3D" id="3.30.200.20">
    <property type="entry name" value="Phosphorylase Kinase, domain 1"/>
    <property type="match status" value="1"/>
</dbReference>
<dbReference type="Gene3D" id="1.10.510.10">
    <property type="entry name" value="Transferase(Phosphotransferase) domain 1"/>
    <property type="match status" value="1"/>
</dbReference>
<dbReference type="Gene3D" id="2.130.10.10">
    <property type="entry name" value="YVTN repeat-like/Quinoprotein amine dehydrogenase"/>
    <property type="match status" value="1"/>
</dbReference>
<dbReference type="InterPro" id="IPR013783">
    <property type="entry name" value="Ig-like_fold"/>
</dbReference>
<dbReference type="InterPro" id="IPR014756">
    <property type="entry name" value="Ig_E-set"/>
</dbReference>
<dbReference type="InterPro" id="IPR002909">
    <property type="entry name" value="IPT_dom"/>
</dbReference>
<dbReference type="InterPro" id="IPR011009">
    <property type="entry name" value="Kinase-like_dom_sf"/>
</dbReference>
<dbReference type="InterPro" id="IPR031148">
    <property type="entry name" value="Plexin"/>
</dbReference>
<dbReference type="InterPro" id="IPR002165">
    <property type="entry name" value="Plexin_repeat"/>
</dbReference>
<dbReference type="InterPro" id="IPR000719">
    <property type="entry name" value="Prot_kinase_dom"/>
</dbReference>
<dbReference type="InterPro" id="IPR017441">
    <property type="entry name" value="Protein_kinase_ATP_BS"/>
</dbReference>
<dbReference type="InterPro" id="IPR016201">
    <property type="entry name" value="PSI"/>
</dbReference>
<dbReference type="InterPro" id="IPR001627">
    <property type="entry name" value="Semap_dom"/>
</dbReference>
<dbReference type="InterPro" id="IPR036352">
    <property type="entry name" value="Semap_dom_sf"/>
</dbReference>
<dbReference type="InterPro" id="IPR001245">
    <property type="entry name" value="Ser-Thr/Tyr_kinase_cat_dom"/>
</dbReference>
<dbReference type="InterPro" id="IPR008266">
    <property type="entry name" value="Tyr_kinase_AS"/>
</dbReference>
<dbReference type="InterPro" id="IPR020635">
    <property type="entry name" value="Tyr_kinase_cat_dom"/>
</dbReference>
<dbReference type="InterPro" id="IPR016244">
    <property type="entry name" value="Tyr_kinase_HGF/MSP_rcpt"/>
</dbReference>
<dbReference type="InterPro" id="IPR015943">
    <property type="entry name" value="WD40/YVTN_repeat-like_dom_sf"/>
</dbReference>
<dbReference type="PANTHER" id="PTHR22625:SF61">
    <property type="entry name" value="HEPATOCYTE GROWTH FACTOR RECEPTOR"/>
    <property type="match status" value="1"/>
</dbReference>
<dbReference type="PANTHER" id="PTHR22625">
    <property type="entry name" value="PLEXIN"/>
    <property type="match status" value="1"/>
</dbReference>
<dbReference type="Pfam" id="PF07714">
    <property type="entry name" value="PK_Tyr_Ser-Thr"/>
    <property type="match status" value="1"/>
</dbReference>
<dbReference type="Pfam" id="PF01437">
    <property type="entry name" value="PSI"/>
    <property type="match status" value="1"/>
</dbReference>
<dbReference type="Pfam" id="PF01403">
    <property type="entry name" value="Sema"/>
    <property type="match status" value="1"/>
</dbReference>
<dbReference type="Pfam" id="PF01833">
    <property type="entry name" value="TIG"/>
    <property type="match status" value="3"/>
</dbReference>
<dbReference type="PIRSF" id="PIRSF000617">
    <property type="entry name" value="TyrPK_HGF-R"/>
    <property type="match status" value="1"/>
</dbReference>
<dbReference type="PRINTS" id="PR00109">
    <property type="entry name" value="TYRKINASE"/>
</dbReference>
<dbReference type="SMART" id="SM00429">
    <property type="entry name" value="IPT"/>
    <property type="match status" value="4"/>
</dbReference>
<dbReference type="SMART" id="SM00423">
    <property type="entry name" value="PSI"/>
    <property type="match status" value="1"/>
</dbReference>
<dbReference type="SMART" id="SM00630">
    <property type="entry name" value="Sema"/>
    <property type="match status" value="1"/>
</dbReference>
<dbReference type="SMART" id="SM00219">
    <property type="entry name" value="TyrKc"/>
    <property type="match status" value="1"/>
</dbReference>
<dbReference type="SUPFAM" id="SSF81296">
    <property type="entry name" value="E set domains"/>
    <property type="match status" value="3"/>
</dbReference>
<dbReference type="SUPFAM" id="SSF103575">
    <property type="entry name" value="Plexin repeat"/>
    <property type="match status" value="1"/>
</dbReference>
<dbReference type="SUPFAM" id="SSF56112">
    <property type="entry name" value="Protein kinase-like (PK-like)"/>
    <property type="match status" value="1"/>
</dbReference>
<dbReference type="SUPFAM" id="SSF101912">
    <property type="entry name" value="Sema domain"/>
    <property type="match status" value="1"/>
</dbReference>
<dbReference type="PROSITE" id="PS00107">
    <property type="entry name" value="PROTEIN_KINASE_ATP"/>
    <property type="match status" value="1"/>
</dbReference>
<dbReference type="PROSITE" id="PS50011">
    <property type="entry name" value="PROTEIN_KINASE_DOM"/>
    <property type="match status" value="1"/>
</dbReference>
<dbReference type="PROSITE" id="PS00109">
    <property type="entry name" value="PROTEIN_KINASE_TYR"/>
    <property type="match status" value="1"/>
</dbReference>
<dbReference type="PROSITE" id="PS51004">
    <property type="entry name" value="SEMA"/>
    <property type="match status" value="1"/>
</dbReference>
<protein>
    <recommendedName>
        <fullName>Hepatocyte growth factor receptor</fullName>
        <shortName>HGF receptor</shortName>
        <ecNumber>2.7.10.1</ecNumber>
    </recommendedName>
    <alternativeName>
        <fullName>HGF/SF receptor</fullName>
    </alternativeName>
    <alternativeName>
        <fullName>Proto-oncogene c-Met</fullName>
    </alternativeName>
    <alternativeName>
        <fullName>Scatter factor receptor</fullName>
        <shortName>SF receptor</shortName>
    </alternativeName>
    <alternativeName>
        <fullName>Tyrosine-protein kinase Met</fullName>
    </alternativeName>
</protein>
<organism>
    <name type="scientific">Microcebus murinus</name>
    <name type="common">Gray mouse lemur</name>
    <name type="synonym">Lemur murinus</name>
    <dbReference type="NCBI Taxonomy" id="30608"/>
    <lineage>
        <taxon>Eukaryota</taxon>
        <taxon>Metazoa</taxon>
        <taxon>Chordata</taxon>
        <taxon>Craniata</taxon>
        <taxon>Vertebrata</taxon>
        <taxon>Euteleostomi</taxon>
        <taxon>Mammalia</taxon>
        <taxon>Eutheria</taxon>
        <taxon>Euarchontoglires</taxon>
        <taxon>Primates</taxon>
        <taxon>Strepsirrhini</taxon>
        <taxon>Lemuriformes</taxon>
        <taxon>Cheirogaleidae</taxon>
        <taxon>Microcebus</taxon>
    </lineage>
</organism>
<reference key="1">
    <citation type="submission" date="2005-11" db="EMBL/GenBank/DDBJ databases">
        <title>NISC comparative sequencing initiative.</title>
        <authorList>
            <person name="Antonellis A."/>
            <person name="Ayele K."/>
            <person name="Benjamin B."/>
            <person name="Blakesley R.W."/>
            <person name="Boakye A."/>
            <person name="Bouffard G.G."/>
            <person name="Brinkley C."/>
            <person name="Brooks S."/>
            <person name="Chu G."/>
            <person name="Coleman H."/>
            <person name="Engle J."/>
            <person name="Gestole M."/>
            <person name="Greene A."/>
            <person name="Guan X."/>
            <person name="Gupta J."/>
            <person name="Haghighi P."/>
            <person name="Han J."/>
            <person name="Hansen N."/>
            <person name="Ho S.-L."/>
            <person name="Hu P."/>
            <person name="Hunter G."/>
            <person name="Hurle B."/>
            <person name="Idol J.R."/>
            <person name="Kwong P."/>
            <person name="Laric P."/>
            <person name="Larson S."/>
            <person name="Lee-Lin S.-Q."/>
            <person name="Legaspi R."/>
            <person name="Madden M."/>
            <person name="Maduro Q.L."/>
            <person name="Maduro V.B."/>
            <person name="Margulies E.H."/>
            <person name="Masiello C."/>
            <person name="Maskeri B."/>
            <person name="McDowell J."/>
            <person name="Mojidi H.A."/>
            <person name="Mullikin J.C."/>
            <person name="Oestreicher J.S."/>
            <person name="Park M."/>
            <person name="Portnoy M.E."/>
            <person name="Prasad A."/>
            <person name="Puri O."/>
            <person name="Reddix-Dugue N."/>
            <person name="Schandler K."/>
            <person name="Schueler M.G."/>
            <person name="Sison C."/>
            <person name="Stantripop S."/>
            <person name="Stephen E."/>
            <person name="Taye A."/>
            <person name="Thomas J.W."/>
            <person name="Thomas P.J."/>
            <person name="Tsipouri V."/>
            <person name="Ung L."/>
            <person name="Vogt J.L."/>
            <person name="Wetherby K.D."/>
            <person name="Young A."/>
            <person name="Green E.D."/>
        </authorList>
    </citation>
    <scope>NUCLEOTIDE SEQUENCE [LARGE SCALE GENOMIC DNA]</scope>
</reference>
<keyword id="KW-0067">ATP-binding</keyword>
<keyword id="KW-1015">Disulfide bond</keyword>
<keyword id="KW-0325">Glycoprotein</keyword>
<keyword id="KW-0418">Kinase</keyword>
<keyword id="KW-0472">Membrane</keyword>
<keyword id="KW-0547">Nucleotide-binding</keyword>
<keyword id="KW-0597">Phosphoprotein</keyword>
<keyword id="KW-0656">Proto-oncogene</keyword>
<keyword id="KW-0675">Receptor</keyword>
<keyword id="KW-1185">Reference proteome</keyword>
<keyword id="KW-0677">Repeat</keyword>
<keyword id="KW-0732">Signal</keyword>
<keyword id="KW-0808">Transferase</keyword>
<keyword id="KW-0812">Transmembrane</keyword>
<keyword id="KW-1133">Transmembrane helix</keyword>
<keyword id="KW-0829">Tyrosine-protein kinase</keyword>
<keyword id="KW-0832">Ubl conjugation</keyword>
<feature type="signal peptide" evidence="4">
    <location>
        <begin position="1"/>
        <end position="24"/>
    </location>
</feature>
<feature type="chain" id="PRO_0000226363" description="Hepatocyte growth factor receptor">
    <location>
        <begin position="25"/>
        <end position="1382"/>
    </location>
</feature>
<feature type="topological domain" description="Extracellular" evidence="4">
    <location>
        <begin position="25"/>
        <end position="935"/>
    </location>
</feature>
<feature type="transmembrane region" description="Helical" evidence="4">
    <location>
        <begin position="936"/>
        <end position="956"/>
    </location>
</feature>
<feature type="topological domain" description="Cytoplasmic" evidence="4">
    <location>
        <begin position="957"/>
        <end position="1382"/>
    </location>
</feature>
<feature type="domain" description="Sema" evidence="6">
    <location>
        <begin position="27"/>
        <end position="516"/>
    </location>
</feature>
<feature type="domain" description="IPT/TIG 1">
    <location>
        <begin position="564"/>
        <end position="656"/>
    </location>
</feature>
<feature type="domain" description="IPT/TIG 2">
    <location>
        <begin position="658"/>
        <end position="740"/>
    </location>
</feature>
<feature type="domain" description="IPT/TIG 3">
    <location>
        <begin position="743"/>
        <end position="837"/>
    </location>
</feature>
<feature type="domain" description="Protein kinase" evidence="5">
    <location>
        <begin position="1079"/>
        <end position="1346"/>
    </location>
</feature>
<feature type="region of interest" description="Interaction with RANBP9" evidence="1">
    <location>
        <begin position="1213"/>
        <end position="1382"/>
    </location>
</feature>
<feature type="region of interest" description="Interaction with MUC20" evidence="1">
    <location>
        <begin position="1321"/>
        <end position="1360"/>
    </location>
</feature>
<feature type="active site" description="Proton acceptor" evidence="5 7">
    <location>
        <position position="1205"/>
    </location>
</feature>
<feature type="binding site" evidence="5">
    <location>
        <begin position="1085"/>
        <end position="1093"/>
    </location>
    <ligand>
        <name>ATP</name>
        <dbReference type="ChEBI" id="CHEBI:30616"/>
    </ligand>
</feature>
<feature type="binding site" evidence="5">
    <location>
        <position position="1111"/>
    </location>
    <ligand>
        <name>ATP</name>
        <dbReference type="ChEBI" id="CHEBI:30616"/>
    </ligand>
</feature>
<feature type="site" description="Cleavage" evidence="4">
    <location>
        <begin position="308"/>
        <end position="309"/>
    </location>
</feature>
<feature type="modified residue" description="Phosphoserine" evidence="2">
    <location>
        <position position="967"/>
    </location>
</feature>
<feature type="modified residue" description="Phosphothreonine" evidence="2">
    <location>
        <position position="978"/>
    </location>
</feature>
<feature type="modified residue" description="Phosphoserine" evidence="2">
    <location>
        <position position="991"/>
    </location>
</feature>
<feature type="modified residue" description="Phosphoserine" evidence="2">
    <location>
        <position position="998"/>
    </location>
</feature>
<feature type="modified residue" description="Phosphoserine" evidence="2">
    <location>
        <position position="1001"/>
    </location>
</feature>
<feature type="modified residue" description="Phosphotyrosine" evidence="2">
    <location>
        <position position="1004"/>
    </location>
</feature>
<feature type="modified residue" description="Phosphotyrosine" evidence="2">
    <location>
        <position position="1231"/>
    </location>
</feature>
<feature type="modified residue" description="Phosphotyrosine; by autocatalysis" evidence="2">
    <location>
        <position position="1235"/>
    </location>
</feature>
<feature type="modified residue" description="Phosphotyrosine; by autocatalysis" evidence="2">
    <location>
        <position position="1236"/>
    </location>
</feature>
<feature type="modified residue" description="Phosphothreonine" evidence="2">
    <location>
        <position position="1290"/>
    </location>
</feature>
<feature type="modified residue" description="Phosphotyrosine; by autocatalysis" evidence="2">
    <location>
        <position position="1350"/>
    </location>
</feature>
<feature type="modified residue" description="Phosphotyrosine; by autocatalysis" evidence="2">
    <location>
        <position position="1357"/>
    </location>
</feature>
<feature type="modified residue" description="Phosphotyrosine" evidence="2">
    <location>
        <position position="1366"/>
    </location>
</feature>
<feature type="glycosylation site" description="N-linked (GlcNAc...) asparagine" evidence="4">
    <location>
        <position position="45"/>
    </location>
</feature>
<feature type="glycosylation site" description="N-linked (GlcNAc...) asparagine" evidence="4">
    <location>
        <position position="100"/>
    </location>
</feature>
<feature type="glycosylation site" description="N-linked (GlcNAc...) asparagine" evidence="4">
    <location>
        <position position="106"/>
    </location>
</feature>
<feature type="glycosylation site" description="N-linked (GlcNAc...) asparagine" evidence="4">
    <location>
        <position position="203"/>
    </location>
</feature>
<feature type="glycosylation site" description="N-linked (GlcNAc...) asparagine" evidence="4">
    <location>
        <position position="359"/>
    </location>
</feature>
<feature type="glycosylation site" description="N-linked (GlcNAc...) asparagine" evidence="4">
    <location>
        <position position="400"/>
    </location>
</feature>
<feature type="glycosylation site" description="N-linked (GlcNAc...) asparagine" evidence="4">
    <location>
        <position position="406"/>
    </location>
</feature>
<feature type="glycosylation site" description="O-linked (Man) threonine" evidence="2">
    <location>
        <position position="583"/>
    </location>
</feature>
<feature type="glycosylation site" description="N-linked (GlcNAc...) asparagine" evidence="4">
    <location>
        <position position="608"/>
    </location>
</feature>
<feature type="glycosylation site" description="N-linked (GlcNAc...) asparagine" evidence="4">
    <location>
        <position position="636"/>
    </location>
</feature>
<feature type="glycosylation site" description="O-linked (Man) threonine" evidence="2">
    <location>
        <position position="677"/>
    </location>
</feature>
<feature type="glycosylation site" description="O-linked (Man) threonine" evidence="2">
    <location>
        <position position="762"/>
    </location>
</feature>
<feature type="glycosylation site" description="N-linked (GlcNAc...) asparagine" evidence="4">
    <location>
        <position position="786"/>
    </location>
</feature>
<feature type="glycosylation site" description="N-linked (GlcNAc...) asparagine" evidence="4">
    <location>
        <position position="880"/>
    </location>
</feature>
<feature type="glycosylation site" description="N-linked (GlcNAc...) asparagine" evidence="4">
    <location>
        <position position="931"/>
    </location>
</feature>
<feature type="disulfide bond" evidence="6">
    <location>
        <begin position="95"/>
        <end position="101"/>
    </location>
</feature>
<feature type="disulfide bond" evidence="6">
    <location>
        <begin position="98"/>
        <end position="160"/>
    </location>
</feature>
<feature type="disulfide bond" evidence="6">
    <location>
        <begin position="133"/>
        <end position="141"/>
    </location>
</feature>
<feature type="disulfide bond" evidence="6">
    <location>
        <begin position="173"/>
        <end position="176"/>
    </location>
</feature>
<feature type="disulfide bond" evidence="6">
    <location>
        <begin position="299"/>
        <end position="364"/>
    </location>
</feature>
<feature type="disulfide bond" evidence="6">
    <location>
        <begin position="386"/>
        <end position="398"/>
    </location>
</feature>
<feature type="disulfide bond" evidence="6">
    <location>
        <begin position="521"/>
        <end position="539"/>
    </location>
</feature>
<feature type="disulfide bond" evidence="6">
    <location>
        <begin position="527"/>
        <end position="562"/>
    </location>
</feature>
<feature type="disulfide bond" evidence="6">
    <location>
        <begin position="530"/>
        <end position="546"/>
    </location>
</feature>
<feature type="disulfide bond" evidence="6">
    <location>
        <begin position="542"/>
        <end position="552"/>
    </location>
</feature>
<accession>Q2QL89</accession>
<gene>
    <name type="primary">MET</name>
</gene>
<proteinExistence type="inferred from homology"/>